<keyword id="KW-0066">ATP synthesis</keyword>
<keyword id="KW-0067">ATP-binding</keyword>
<keyword id="KW-0997">Cell inner membrane</keyword>
<keyword id="KW-1003">Cell membrane</keyword>
<keyword id="KW-0139">CF(1)</keyword>
<keyword id="KW-0375">Hydrogen ion transport</keyword>
<keyword id="KW-0406">Ion transport</keyword>
<keyword id="KW-0472">Membrane</keyword>
<keyword id="KW-0547">Nucleotide-binding</keyword>
<keyword id="KW-1278">Translocase</keyword>
<keyword id="KW-0813">Transport</keyword>
<gene>
    <name evidence="1" type="primary">atpA</name>
    <name type="ordered locus">BF2234</name>
</gene>
<sequence length="527" mass="57408">MSENIRVSEVSDILRQQLEGIETKVQLDEIGTVLQVSDGVVRIYGLRNAEANELLEFDNGIKAIVMNLEEDNVGAVLLGPTDKIKEGFTVKRTKRIASIRVGESMLGRVIDPLGEPLDGKGLIGGELYEMPLERKAPGVIYRQPVNQPLQTGLKAVDAMIPIGRGQRELIIGDRQTGKTSIAIDTIINQRSNYEAGDPVYCIYVAIGQKGSTVASIVNTLRQYGAMDYTIVVAATAGDPAALQYFAPFAGAAIGEYFRDTGRHALVVYDDLSKQAVSYREVSLILRRPSGREAYPGDIFYLHSRLLERAAKIINQEEVAREMNDLPESLKGKVKGGGSLTALPIIETQAGDVSAYIPTNVISITDGQIFLDTDLFNQGNRPAINVGISVSRVGGNAQIKAMKKVAGTLKIDQAQYRELEAFSKFSGDMDPVTALTIDKGQKNARLLVQPQYSPMPVEKQIAILYCGIHGLLRNVPLDKVEDFEAAFLNTLALDHQADVLDVLKTGVINDEVTKAIEETAAMVAKQYS</sequence>
<name>ATPA_BACFN</name>
<dbReference type="EC" id="7.1.2.2" evidence="1"/>
<dbReference type="EMBL" id="CR626927">
    <property type="protein sequence ID" value="CAH07928.1"/>
    <property type="molecule type" value="Genomic_DNA"/>
</dbReference>
<dbReference type="RefSeq" id="WP_005787491.1">
    <property type="nucleotide sequence ID" value="NZ_UFTH01000001.1"/>
</dbReference>
<dbReference type="SMR" id="Q5LD82"/>
<dbReference type="PaxDb" id="272559-BF9343_2147"/>
<dbReference type="GeneID" id="60366310"/>
<dbReference type="KEGG" id="bfs:BF9343_2147"/>
<dbReference type="eggNOG" id="COG0056">
    <property type="taxonomic scope" value="Bacteria"/>
</dbReference>
<dbReference type="HOGENOM" id="CLU_010091_2_1_10"/>
<dbReference type="Proteomes" id="UP000006731">
    <property type="component" value="Chromosome"/>
</dbReference>
<dbReference type="GO" id="GO:0005886">
    <property type="term" value="C:plasma membrane"/>
    <property type="evidence" value="ECO:0007669"/>
    <property type="project" value="UniProtKB-SubCell"/>
</dbReference>
<dbReference type="GO" id="GO:0045259">
    <property type="term" value="C:proton-transporting ATP synthase complex"/>
    <property type="evidence" value="ECO:0007669"/>
    <property type="project" value="UniProtKB-KW"/>
</dbReference>
<dbReference type="GO" id="GO:0043531">
    <property type="term" value="F:ADP binding"/>
    <property type="evidence" value="ECO:0007669"/>
    <property type="project" value="TreeGrafter"/>
</dbReference>
<dbReference type="GO" id="GO:0005524">
    <property type="term" value="F:ATP binding"/>
    <property type="evidence" value="ECO:0007669"/>
    <property type="project" value="UniProtKB-UniRule"/>
</dbReference>
<dbReference type="GO" id="GO:0046933">
    <property type="term" value="F:proton-transporting ATP synthase activity, rotational mechanism"/>
    <property type="evidence" value="ECO:0007669"/>
    <property type="project" value="UniProtKB-UniRule"/>
</dbReference>
<dbReference type="CDD" id="cd18113">
    <property type="entry name" value="ATP-synt_F1_alpha_C"/>
    <property type="match status" value="1"/>
</dbReference>
<dbReference type="CDD" id="cd18116">
    <property type="entry name" value="ATP-synt_F1_alpha_N"/>
    <property type="match status" value="1"/>
</dbReference>
<dbReference type="CDD" id="cd01132">
    <property type="entry name" value="F1-ATPase_alpha_CD"/>
    <property type="match status" value="1"/>
</dbReference>
<dbReference type="FunFam" id="1.20.150.20:FF:000001">
    <property type="entry name" value="ATP synthase subunit alpha"/>
    <property type="match status" value="1"/>
</dbReference>
<dbReference type="FunFam" id="2.40.30.20:FF:000001">
    <property type="entry name" value="ATP synthase subunit alpha"/>
    <property type="match status" value="1"/>
</dbReference>
<dbReference type="FunFam" id="3.40.50.300:FF:000002">
    <property type="entry name" value="ATP synthase subunit alpha"/>
    <property type="match status" value="1"/>
</dbReference>
<dbReference type="Gene3D" id="2.40.30.20">
    <property type="match status" value="1"/>
</dbReference>
<dbReference type="Gene3D" id="1.20.150.20">
    <property type="entry name" value="ATP synthase alpha/beta chain, C-terminal domain"/>
    <property type="match status" value="1"/>
</dbReference>
<dbReference type="Gene3D" id="3.40.50.300">
    <property type="entry name" value="P-loop containing nucleotide triphosphate hydrolases"/>
    <property type="match status" value="1"/>
</dbReference>
<dbReference type="HAMAP" id="MF_01346">
    <property type="entry name" value="ATP_synth_alpha_bact"/>
    <property type="match status" value="1"/>
</dbReference>
<dbReference type="InterPro" id="IPR023366">
    <property type="entry name" value="ATP_synth_asu-like_sf"/>
</dbReference>
<dbReference type="InterPro" id="IPR000793">
    <property type="entry name" value="ATP_synth_asu_C"/>
</dbReference>
<dbReference type="InterPro" id="IPR038376">
    <property type="entry name" value="ATP_synth_asu_C_sf"/>
</dbReference>
<dbReference type="InterPro" id="IPR033732">
    <property type="entry name" value="ATP_synth_F1_a_nt-bd_dom"/>
</dbReference>
<dbReference type="InterPro" id="IPR005294">
    <property type="entry name" value="ATP_synth_F1_asu"/>
</dbReference>
<dbReference type="InterPro" id="IPR020003">
    <property type="entry name" value="ATPase_a/bsu_AS"/>
</dbReference>
<dbReference type="InterPro" id="IPR004100">
    <property type="entry name" value="ATPase_F1/V1/A1_a/bsu_N"/>
</dbReference>
<dbReference type="InterPro" id="IPR036121">
    <property type="entry name" value="ATPase_F1/V1/A1_a/bsu_N_sf"/>
</dbReference>
<dbReference type="InterPro" id="IPR000194">
    <property type="entry name" value="ATPase_F1/V1/A1_a/bsu_nucl-bd"/>
</dbReference>
<dbReference type="InterPro" id="IPR027417">
    <property type="entry name" value="P-loop_NTPase"/>
</dbReference>
<dbReference type="NCBIfam" id="TIGR00962">
    <property type="entry name" value="atpA"/>
    <property type="match status" value="1"/>
</dbReference>
<dbReference type="NCBIfam" id="NF009884">
    <property type="entry name" value="PRK13343.1"/>
    <property type="match status" value="1"/>
</dbReference>
<dbReference type="PANTHER" id="PTHR48082">
    <property type="entry name" value="ATP SYNTHASE SUBUNIT ALPHA, MITOCHONDRIAL"/>
    <property type="match status" value="1"/>
</dbReference>
<dbReference type="PANTHER" id="PTHR48082:SF2">
    <property type="entry name" value="ATP SYNTHASE SUBUNIT ALPHA, MITOCHONDRIAL"/>
    <property type="match status" value="1"/>
</dbReference>
<dbReference type="Pfam" id="PF00006">
    <property type="entry name" value="ATP-synt_ab"/>
    <property type="match status" value="1"/>
</dbReference>
<dbReference type="Pfam" id="PF00306">
    <property type="entry name" value="ATP-synt_ab_C"/>
    <property type="match status" value="1"/>
</dbReference>
<dbReference type="Pfam" id="PF02874">
    <property type="entry name" value="ATP-synt_ab_N"/>
    <property type="match status" value="1"/>
</dbReference>
<dbReference type="SUPFAM" id="SSF47917">
    <property type="entry name" value="C-terminal domain of alpha and beta subunits of F1 ATP synthase"/>
    <property type="match status" value="1"/>
</dbReference>
<dbReference type="SUPFAM" id="SSF50615">
    <property type="entry name" value="N-terminal domain of alpha and beta subunits of F1 ATP synthase"/>
    <property type="match status" value="1"/>
</dbReference>
<dbReference type="SUPFAM" id="SSF52540">
    <property type="entry name" value="P-loop containing nucleoside triphosphate hydrolases"/>
    <property type="match status" value="1"/>
</dbReference>
<dbReference type="PROSITE" id="PS00152">
    <property type="entry name" value="ATPASE_ALPHA_BETA"/>
    <property type="match status" value="1"/>
</dbReference>
<accession>Q5LD82</accession>
<protein>
    <recommendedName>
        <fullName evidence="1">ATP synthase subunit alpha</fullName>
        <ecNumber evidence="1">7.1.2.2</ecNumber>
    </recommendedName>
    <alternativeName>
        <fullName evidence="1">ATP synthase F1 sector subunit alpha</fullName>
    </alternativeName>
    <alternativeName>
        <fullName evidence="1">F-ATPase subunit alpha</fullName>
    </alternativeName>
</protein>
<feature type="chain" id="PRO_0000238200" description="ATP synthase subunit alpha">
    <location>
        <begin position="1"/>
        <end position="527"/>
    </location>
</feature>
<feature type="binding site" evidence="1">
    <location>
        <begin position="172"/>
        <end position="179"/>
    </location>
    <ligand>
        <name>ATP</name>
        <dbReference type="ChEBI" id="CHEBI:30616"/>
    </ligand>
</feature>
<feature type="site" description="Required for activity" evidence="1">
    <location>
        <position position="388"/>
    </location>
</feature>
<organism>
    <name type="scientific">Bacteroides fragilis (strain ATCC 25285 / DSM 2151 / CCUG 4856 / JCM 11019 / LMG 10263 / NCTC 9343 / Onslow / VPI 2553 / EN-2)</name>
    <dbReference type="NCBI Taxonomy" id="272559"/>
    <lineage>
        <taxon>Bacteria</taxon>
        <taxon>Pseudomonadati</taxon>
        <taxon>Bacteroidota</taxon>
        <taxon>Bacteroidia</taxon>
        <taxon>Bacteroidales</taxon>
        <taxon>Bacteroidaceae</taxon>
        <taxon>Bacteroides</taxon>
    </lineage>
</organism>
<evidence type="ECO:0000255" key="1">
    <source>
        <dbReference type="HAMAP-Rule" id="MF_01346"/>
    </source>
</evidence>
<comment type="function">
    <text evidence="1">Produces ATP from ADP in the presence of a proton gradient across the membrane. The alpha chain is a regulatory subunit.</text>
</comment>
<comment type="catalytic activity">
    <reaction evidence="1">
        <text>ATP + H2O + 4 H(+)(in) = ADP + phosphate + 5 H(+)(out)</text>
        <dbReference type="Rhea" id="RHEA:57720"/>
        <dbReference type="ChEBI" id="CHEBI:15377"/>
        <dbReference type="ChEBI" id="CHEBI:15378"/>
        <dbReference type="ChEBI" id="CHEBI:30616"/>
        <dbReference type="ChEBI" id="CHEBI:43474"/>
        <dbReference type="ChEBI" id="CHEBI:456216"/>
        <dbReference type="EC" id="7.1.2.2"/>
    </reaction>
</comment>
<comment type="subunit">
    <text evidence="1">F-type ATPases have 2 components, CF(1) - the catalytic core - and CF(0) - the membrane proton channel. CF(1) has five subunits: alpha(3), beta(3), gamma(1), delta(1), epsilon(1). CF(0) has three main subunits: a(1), b(2) and c(9-12). The alpha and beta chains form an alternating ring which encloses part of the gamma chain. CF(1) is attached to CF(0) by a central stalk formed by the gamma and epsilon chains, while a peripheral stalk is formed by the delta and b chains.</text>
</comment>
<comment type="subcellular location">
    <subcellularLocation>
        <location evidence="1">Cell inner membrane</location>
        <topology evidence="1">Peripheral membrane protein</topology>
    </subcellularLocation>
</comment>
<comment type="similarity">
    <text evidence="1">Belongs to the ATPase alpha/beta chains family.</text>
</comment>
<reference key="1">
    <citation type="journal article" date="2005" name="Science">
        <title>Extensive DNA inversions in the B. fragilis genome control variable gene expression.</title>
        <authorList>
            <person name="Cerdeno-Tarraga A.-M."/>
            <person name="Patrick S."/>
            <person name="Crossman L.C."/>
            <person name="Blakely G."/>
            <person name="Abratt V."/>
            <person name="Lennard N."/>
            <person name="Poxton I."/>
            <person name="Duerden B."/>
            <person name="Harris B."/>
            <person name="Quail M.A."/>
            <person name="Barron A."/>
            <person name="Clark L."/>
            <person name="Corton C."/>
            <person name="Doggett J."/>
            <person name="Holden M.T.G."/>
            <person name="Larke N."/>
            <person name="Line A."/>
            <person name="Lord A."/>
            <person name="Norbertczak H."/>
            <person name="Ormond D."/>
            <person name="Price C."/>
            <person name="Rabbinowitsch E."/>
            <person name="Woodward J."/>
            <person name="Barrell B.G."/>
            <person name="Parkhill J."/>
        </authorList>
    </citation>
    <scope>NUCLEOTIDE SEQUENCE [LARGE SCALE GENOMIC DNA]</scope>
    <source>
        <strain>ATCC 25285 / DSM 2151 / CCUG 4856 / JCM 11019 / LMG 10263 / NCTC 9343 / Onslow / VPI 2553 / EN-2</strain>
    </source>
</reference>
<proteinExistence type="inferred from homology"/>